<proteinExistence type="evidence at protein level"/>
<name>FIB_STAAU</name>
<accession>P0C6P2</accession>
<accession>P68798</accession>
<accession>Q08691</accession>
<evidence type="ECO:0000250" key="1">
    <source>
        <dbReference type="UniProtKB" id="A6QG59"/>
    </source>
</evidence>
<evidence type="ECO:0000269" key="2">
    <source>
    </source>
</evidence>
<reference key="1">
    <citation type="journal article" date="1994" name="Mol. Microbiol.">
        <title>Cloning and characterization of a gene for a 19 kDa fibrinogen-binding protein from Staphylococcus aureus.</title>
        <authorList>
            <person name="Boden M.K."/>
            <person name="Flock J.-I."/>
        </authorList>
    </citation>
    <scope>NUCLEOTIDE SEQUENCE [GENOMIC DNA]</scope>
    <scope>FUNCTION IN FIBRINOGEN BINDING</scope>
    <scope>SUBCELLULAR LOCATION</scope>
    <source>
        <strain>FDA 486</strain>
    </source>
</reference>
<reference key="2">
    <citation type="journal article" date="2002" name="J. Infect. Dis.">
        <title>Platelet-binding domains in 2 fibrinogen-binding proteins of Staphylococcus aureus identified by phage display.</title>
        <authorList>
            <person name="Heilmann C."/>
            <person name="Herrmann M."/>
            <person name="Kehrel B.E."/>
            <person name="Peters G."/>
        </authorList>
    </citation>
    <scope>NUCLEOTIDE SEQUENCE [GENOMIC DNA]</scope>
    <source>
        <strain>4074</strain>
    </source>
</reference>
<comment type="function">
    <text evidence="1 2">Extracellular fibrinogen-binding protein that plays an important role in virulence (PubMed:7934883). By interacting with the alpha chain of fibrinogen and its derivative fibrin, enhances a non-functional interaction between fibrinogen and platelets and is responsible for repression of fibrinogen-dependent platelet aggregation. In addition, assembles a fibrinogen protective shield around the bacteria which results in impaired phagocytic clearance by the host. Mechanistically, interacts with host complement C3b deposited on the surface of the bacterium via its C-terminal and then recruits fibrinogen via its N-terminal (By similarity).</text>
</comment>
<comment type="subunit">
    <text evidence="1">Interacts with host fibrinogen alpha chain/FGA. Interacts with host complement protein C3.</text>
</comment>
<comment type="subcellular location">
    <subcellularLocation>
        <location evidence="2">Secreted</location>
    </subcellularLocation>
</comment>
<keyword id="KW-0964">Secreted</keyword>
<keyword id="KW-0732">Signal</keyword>
<keyword id="KW-0843">Virulence</keyword>
<sequence length="165" mass="18793">MKNKLIAKSLLTIAAIGITTTTIASTADASEGYGPREKKPVSINHNIVEYNDGTFKYQSRPKFNSTPKYIKFKHDYNILEFNDGTFEYGARPQFNKPAAKTDATIKKEQKLIQAQNLVREFEKTHTVSAHRKAQKAVNLVSFEYKVKKMVLQERIDNVLKQGLVR</sequence>
<organism>
    <name type="scientific">Staphylococcus aureus</name>
    <dbReference type="NCBI Taxonomy" id="1280"/>
    <lineage>
        <taxon>Bacteria</taxon>
        <taxon>Bacillati</taxon>
        <taxon>Bacillota</taxon>
        <taxon>Bacilli</taxon>
        <taxon>Bacillales</taxon>
        <taxon>Staphylococcaceae</taxon>
        <taxon>Staphylococcus</taxon>
    </lineage>
</organism>
<dbReference type="EMBL" id="X72013">
    <property type="protein sequence ID" value="CAA50892.1"/>
    <property type="molecule type" value="Genomic_DNA"/>
</dbReference>
<dbReference type="EMBL" id="AJ306909">
    <property type="protein sequence ID" value="CAC84780.1"/>
    <property type="molecule type" value="Genomic_DNA"/>
</dbReference>
<dbReference type="PIR" id="S49411">
    <property type="entry name" value="S34269"/>
</dbReference>
<dbReference type="PIR" id="S49413">
    <property type="entry name" value="S34270"/>
</dbReference>
<dbReference type="RefSeq" id="WP_000791581.1">
    <property type="nucleotide sequence ID" value="NZ_WYDB01000003.1"/>
</dbReference>
<dbReference type="SMR" id="P0C6P2"/>
<dbReference type="OMA" id="PRPHFNK"/>
<dbReference type="GO" id="GO:0005615">
    <property type="term" value="C:extracellular space"/>
    <property type="evidence" value="ECO:0007669"/>
    <property type="project" value="InterPro"/>
</dbReference>
<dbReference type="GO" id="GO:0001848">
    <property type="term" value="F:complement binding"/>
    <property type="evidence" value="ECO:0007669"/>
    <property type="project" value="InterPro"/>
</dbReference>
<dbReference type="FunFam" id="1.10.10.1270:FF:000001">
    <property type="entry name" value="Fibrinogen-binding protein"/>
    <property type="match status" value="1"/>
</dbReference>
<dbReference type="Gene3D" id="1.10.10.1270">
    <property type="entry name" value="Sbi, C3 binding domain IV"/>
    <property type="match status" value="1"/>
</dbReference>
<dbReference type="InterPro" id="IPR036233">
    <property type="entry name" value="Efb_C_sf"/>
</dbReference>
<dbReference type="InterPro" id="IPR021033">
    <property type="entry name" value="Extracellular_fibrinogen-bd_C"/>
</dbReference>
<dbReference type="InterPro" id="IPR041909">
    <property type="entry name" value="Sbi_C3_db_domIV"/>
</dbReference>
<dbReference type="Pfam" id="PF12199">
    <property type="entry name" value="efb-c"/>
    <property type="match status" value="1"/>
</dbReference>
<dbReference type="SUPFAM" id="SSF158366">
    <property type="entry name" value="Efb C-domain-like"/>
    <property type="match status" value="1"/>
</dbReference>
<gene>
    <name type="primary">fib</name>
    <name type="synonym">efb</name>
</gene>
<feature type="signal peptide">
    <location>
        <begin position="1"/>
        <end position="29"/>
    </location>
</feature>
<feature type="chain" id="PRO_0000021262" description="Fibrinogen-binding protein">
    <location>
        <begin position="30"/>
        <end position="165"/>
    </location>
</feature>
<protein>
    <recommendedName>
        <fullName>Fibrinogen-binding protein</fullName>
    </recommendedName>
</protein>